<protein>
    <recommendedName>
        <fullName evidence="3">Cytochrome P450 CYP107DY1</fullName>
        <ecNumber evidence="2">1.14.-.-</ecNumber>
    </recommendedName>
    <alternativeName>
        <fullName evidence="5">Mevastatin hydroxylase</fullName>
    </alternativeName>
</protein>
<accession>D5E3H2</accession>
<feature type="chain" id="PRO_0000439192" description="Cytochrome P450 CYP107DY1">
    <location>
        <begin position="1"/>
        <end position="410"/>
    </location>
</feature>
<feature type="binding site" evidence="1">
    <location>
        <position position="106"/>
    </location>
    <ligand>
        <name>heme</name>
        <dbReference type="ChEBI" id="CHEBI:30413"/>
    </ligand>
</feature>
<feature type="binding site" evidence="1">
    <location>
        <position position="110"/>
    </location>
    <ligand>
        <name>heme</name>
        <dbReference type="ChEBI" id="CHEBI:30413"/>
    </ligand>
</feature>
<feature type="binding site" evidence="5">
    <location>
        <position position="249"/>
    </location>
    <ligand>
        <name>substrate</name>
    </ligand>
</feature>
<feature type="binding site" evidence="5">
    <location>
        <position position="253"/>
    </location>
    <ligand>
        <name>substrate</name>
    </ligand>
</feature>
<feature type="binding site" evidence="1">
    <location>
        <position position="302"/>
    </location>
    <ligand>
        <name>heme</name>
        <dbReference type="ChEBI" id="CHEBI:30413"/>
    </ligand>
</feature>
<feature type="binding site" evidence="1">
    <location>
        <position position="358"/>
    </location>
    <ligand>
        <name>heme</name>
        <dbReference type="ChEBI" id="CHEBI:30413"/>
    </ligand>
</feature>
<feature type="binding site" description="axial binding residue" evidence="1">
    <location>
        <position position="360"/>
    </location>
    <ligand>
        <name>heme</name>
        <dbReference type="ChEBI" id="CHEBI:30413"/>
    </ligand>
    <ligandPart>
        <name>Fe</name>
        <dbReference type="ChEBI" id="CHEBI:18248"/>
    </ligandPart>
</feature>
<evidence type="ECO:0000250" key="1">
    <source>
        <dbReference type="UniProtKB" id="Q59523"/>
    </source>
</evidence>
<evidence type="ECO:0000269" key="2">
    <source>
    </source>
</evidence>
<evidence type="ECO:0000303" key="3">
    <source>
    </source>
</evidence>
<evidence type="ECO:0000305" key="4"/>
<evidence type="ECO:0000305" key="5">
    <source>
    </source>
</evidence>
<evidence type="ECO:0000312" key="6">
    <source>
        <dbReference type="EMBL" id="ADE72347.1"/>
    </source>
</evidence>
<evidence type="ECO:0000312" key="7">
    <source>
        <dbReference type="Proteomes" id="UP000000935"/>
    </source>
</evidence>
<comment type="function">
    <text evidence="2">Cytochrome P450 whose physiological substrate is unknown. In vitro, is able to catalyze the selective hydroxylation of mevastatin to pravastatin, the widely used therapeutic agent for hypercholesterolemia.</text>
</comment>
<comment type="catalytic activity">
    <reaction evidence="2">
        <text>mevastatin + 2 reduced [2Fe-2S]-[ferredoxin] + O2 + 2 H(+) = pravastatin lactone + 2 oxidized [2Fe-2S]-[ferredoxin] + H2O</text>
        <dbReference type="Rhea" id="RHEA:51668"/>
        <dbReference type="Rhea" id="RHEA-COMP:10000"/>
        <dbReference type="Rhea" id="RHEA-COMP:10001"/>
        <dbReference type="ChEBI" id="CHEBI:15377"/>
        <dbReference type="ChEBI" id="CHEBI:15378"/>
        <dbReference type="ChEBI" id="CHEBI:15379"/>
        <dbReference type="ChEBI" id="CHEBI:33737"/>
        <dbReference type="ChEBI" id="CHEBI:33738"/>
        <dbReference type="ChEBI" id="CHEBI:34848"/>
        <dbReference type="ChEBI" id="CHEBI:145933"/>
    </reaction>
</comment>
<comment type="cofactor">
    <cofactor evidence="2">
        <name>heme</name>
        <dbReference type="ChEBI" id="CHEBI:30413"/>
    </cofactor>
</comment>
<comment type="biotechnology">
    <text evidence="5">Could be a valuable biocatalyst used in the industrial field for an efficient biotransformation of mevastatin.</text>
</comment>
<comment type="similarity">
    <text evidence="4">Belongs to the cytochrome P450 family.</text>
</comment>
<keyword id="KW-0349">Heme</keyword>
<keyword id="KW-0408">Iron</keyword>
<keyword id="KW-0479">Metal-binding</keyword>
<keyword id="KW-0503">Monooxygenase</keyword>
<keyword id="KW-0560">Oxidoreductase</keyword>
<keyword id="KW-0614">Plasmid</keyword>
<keyword id="KW-1185">Reference proteome</keyword>
<name>CP107_PRIM1</name>
<geneLocation type="plasmid" evidence="6 7">
    <name>pBM500</name>
</geneLocation>
<dbReference type="EC" id="1.14.-.-" evidence="2"/>
<dbReference type="EMBL" id="CP001988">
    <property type="protein sequence ID" value="ADE72347.1"/>
    <property type="molecule type" value="Genomic_DNA"/>
</dbReference>
<dbReference type="RefSeq" id="WP_013060111.1">
    <property type="nucleotide sequence ID" value="NC_014025.1"/>
</dbReference>
<dbReference type="SMR" id="D5E3H2"/>
<dbReference type="KEGG" id="bmq:BMQ_pBM50008"/>
<dbReference type="HOGENOM" id="CLU_033716_1_0_9"/>
<dbReference type="Proteomes" id="UP000000935">
    <property type="component" value="Plasmid pBM500"/>
</dbReference>
<dbReference type="GO" id="GO:0020037">
    <property type="term" value="F:heme binding"/>
    <property type="evidence" value="ECO:0000314"/>
    <property type="project" value="UniProtKB"/>
</dbReference>
<dbReference type="GO" id="GO:0005506">
    <property type="term" value="F:iron ion binding"/>
    <property type="evidence" value="ECO:0000314"/>
    <property type="project" value="UniProtKB"/>
</dbReference>
<dbReference type="GO" id="GO:0004497">
    <property type="term" value="F:monooxygenase activity"/>
    <property type="evidence" value="ECO:0000314"/>
    <property type="project" value="UniProtKB"/>
</dbReference>
<dbReference type="GO" id="GO:0016705">
    <property type="term" value="F:oxidoreductase activity, acting on paired donors, with incorporation or reduction of molecular oxygen"/>
    <property type="evidence" value="ECO:0007669"/>
    <property type="project" value="InterPro"/>
</dbReference>
<dbReference type="CDD" id="cd11029">
    <property type="entry name" value="CYP107-like"/>
    <property type="match status" value="1"/>
</dbReference>
<dbReference type="FunFam" id="1.10.630.10:FF:000018">
    <property type="entry name" value="Cytochrome P450 monooxygenase"/>
    <property type="match status" value="1"/>
</dbReference>
<dbReference type="Gene3D" id="1.10.630.10">
    <property type="entry name" value="Cytochrome P450"/>
    <property type="match status" value="1"/>
</dbReference>
<dbReference type="InterPro" id="IPR001128">
    <property type="entry name" value="Cyt_P450"/>
</dbReference>
<dbReference type="InterPro" id="IPR002397">
    <property type="entry name" value="Cyt_P450_B"/>
</dbReference>
<dbReference type="InterPro" id="IPR017972">
    <property type="entry name" value="Cyt_P450_CS"/>
</dbReference>
<dbReference type="InterPro" id="IPR036396">
    <property type="entry name" value="Cyt_P450_sf"/>
</dbReference>
<dbReference type="PANTHER" id="PTHR46696:SF1">
    <property type="entry name" value="CYTOCHROME P450 YJIB-RELATED"/>
    <property type="match status" value="1"/>
</dbReference>
<dbReference type="PANTHER" id="PTHR46696">
    <property type="entry name" value="P450, PUTATIVE (EUROFUNG)-RELATED"/>
    <property type="match status" value="1"/>
</dbReference>
<dbReference type="Pfam" id="PF00067">
    <property type="entry name" value="p450"/>
    <property type="match status" value="1"/>
</dbReference>
<dbReference type="PRINTS" id="PR00359">
    <property type="entry name" value="BP450"/>
</dbReference>
<dbReference type="PRINTS" id="PR00385">
    <property type="entry name" value="P450"/>
</dbReference>
<dbReference type="SUPFAM" id="SSF48264">
    <property type="entry name" value="Cytochrome P450"/>
    <property type="match status" value="1"/>
</dbReference>
<dbReference type="PROSITE" id="PS00086">
    <property type="entry name" value="CYTOCHROME_P450"/>
    <property type="match status" value="1"/>
</dbReference>
<sequence>MKKVTVDDFSSPENMHDVIGFYKKLTEHQEPLIRLDDYYGLGPAWVALRHDDVVTILKNPRFLKDVRKFTPLQDKKDSIDDSTSASKLFEWMMNMPNMLTVDPPDHTRLRRLASKAFTPRMIENLRPRIQQITNELLDSVEGKRNMDLVADFSFPLPIIVISEMLGIPPLDQKRFRDWTDKLIKAAMDPSQGAVVMETLKEFIDYIKKMLVEKRNHPDDDVMSALLQAHEQEDKLSENELLSTIWLLITAGHETTAHLISNGVLALLKHPEQMRLLRDNPSLLPSAVEELLRYAGPVMIGGRFAGEDIIMHGKMIPKGEMVLFSLVAANIDSQKFSYPEGLDITREENEHLTFGKGIHHCLGAPLARMEAHIAFGTLLQRFPDLRLAIESEQLVYNNSTLRSLKSLPVIF</sequence>
<proteinExistence type="evidence at protein level"/>
<organism>
    <name type="scientific">Priestia megaterium (strain ATCC 12872 / QMB1551)</name>
    <name type="common">Bacillus megaterium</name>
    <dbReference type="NCBI Taxonomy" id="545693"/>
    <lineage>
        <taxon>Bacteria</taxon>
        <taxon>Bacillati</taxon>
        <taxon>Bacillota</taxon>
        <taxon>Bacilli</taxon>
        <taxon>Bacillales</taxon>
        <taxon>Bacillaceae</taxon>
        <taxon>Priestia</taxon>
    </lineage>
</organism>
<reference key="1">
    <citation type="journal article" date="2011" name="J. Bacteriol.">
        <title>Genome sequences of the biotechnologically important Bacillus megaterium strains QM B1551 and DSM319.</title>
        <authorList>
            <person name="Eppinger M."/>
            <person name="Bunk B."/>
            <person name="Johns M.A."/>
            <person name="Edirisinghe J.N."/>
            <person name="Kutumbaka K.K."/>
            <person name="Koenig S.S."/>
            <person name="Creasy H.H."/>
            <person name="Rosovitz M.J."/>
            <person name="Riley D.R."/>
            <person name="Daugherty S."/>
            <person name="Martin M."/>
            <person name="Elbourne L.D."/>
            <person name="Paulsen I."/>
            <person name="Biedendieck R."/>
            <person name="Braun C."/>
            <person name="Grayburn S."/>
            <person name="Dhingra S."/>
            <person name="Lukyanchuk V."/>
            <person name="Ball B."/>
            <person name="Ul-Qamar R."/>
            <person name="Seibel J."/>
            <person name="Bremer E."/>
            <person name="Jahn D."/>
            <person name="Ravel J."/>
            <person name="Vary P.S."/>
        </authorList>
    </citation>
    <scope>NUCLEOTIDE SEQUENCE [LARGE SCALE GENOMIC DNA]</scope>
    <source>
        <strain>ATCC 12872 / DSM 1804 / QMB1551</strain>
    </source>
</reference>
<reference key="2">
    <citation type="journal article" date="2016" name="J. Biotechnol.">
        <title>Identification of a new plasmid-encoded cytochrome P450 CYP107DY1 from Bacillus megaterium with a catalytic activity towards mevastatin.</title>
        <authorList>
            <person name="Milhim M."/>
            <person name="Putkaradze N."/>
            <person name="Abdulmughni A."/>
            <person name="Kern F."/>
            <person name="Hartz P."/>
            <person name="Bernhardt R."/>
        </authorList>
    </citation>
    <scope>FUNCTION</scope>
    <scope>CATALYTIC ACTIVITY</scope>
    <scope>COFACTOR</scope>
    <scope>3D-STRUCTURE MODELING</scope>
    <scope>BIOTECHNOLOGY</scope>
    <source>
        <strain>ATCC 12872 / DSM 1804 / QMB1551</strain>
    </source>
</reference>
<gene>
    <name evidence="6" type="ordered locus">BMQ_pBM50008</name>
</gene>